<name>RNH_CAMJJ</name>
<evidence type="ECO:0000255" key="1">
    <source>
        <dbReference type="HAMAP-Rule" id="MF_00042"/>
    </source>
</evidence>
<evidence type="ECO:0000255" key="2">
    <source>
        <dbReference type="PROSITE-ProRule" id="PRU00408"/>
    </source>
</evidence>
<proteinExistence type="inferred from homology"/>
<organism>
    <name type="scientific">Campylobacter jejuni subsp. jejuni serotype O:23/36 (strain 81-176)</name>
    <dbReference type="NCBI Taxonomy" id="354242"/>
    <lineage>
        <taxon>Bacteria</taxon>
        <taxon>Pseudomonadati</taxon>
        <taxon>Campylobacterota</taxon>
        <taxon>Epsilonproteobacteria</taxon>
        <taxon>Campylobacterales</taxon>
        <taxon>Campylobacteraceae</taxon>
        <taxon>Campylobacter</taxon>
    </lineage>
</organism>
<dbReference type="EC" id="3.1.26.4" evidence="1"/>
<dbReference type="EMBL" id="CP000538">
    <property type="protein sequence ID" value="EAQ72858.1"/>
    <property type="molecule type" value="Genomic_DNA"/>
</dbReference>
<dbReference type="RefSeq" id="WP_002851277.1">
    <property type="nucleotide sequence ID" value="NC_008787.1"/>
</dbReference>
<dbReference type="SMR" id="A1W1N8"/>
<dbReference type="KEGG" id="cjj:CJJ81176_1627"/>
<dbReference type="eggNOG" id="COG0328">
    <property type="taxonomic scope" value="Bacteria"/>
</dbReference>
<dbReference type="HOGENOM" id="CLU_030894_6_2_7"/>
<dbReference type="Proteomes" id="UP000000646">
    <property type="component" value="Chromosome"/>
</dbReference>
<dbReference type="GO" id="GO:0005737">
    <property type="term" value="C:cytoplasm"/>
    <property type="evidence" value="ECO:0007669"/>
    <property type="project" value="UniProtKB-SubCell"/>
</dbReference>
<dbReference type="GO" id="GO:0000287">
    <property type="term" value="F:magnesium ion binding"/>
    <property type="evidence" value="ECO:0007669"/>
    <property type="project" value="UniProtKB-UniRule"/>
</dbReference>
<dbReference type="GO" id="GO:0003676">
    <property type="term" value="F:nucleic acid binding"/>
    <property type="evidence" value="ECO:0007669"/>
    <property type="project" value="InterPro"/>
</dbReference>
<dbReference type="GO" id="GO:0004523">
    <property type="term" value="F:RNA-DNA hybrid ribonuclease activity"/>
    <property type="evidence" value="ECO:0007669"/>
    <property type="project" value="UniProtKB-UniRule"/>
</dbReference>
<dbReference type="GO" id="GO:0043137">
    <property type="term" value="P:DNA replication, removal of RNA primer"/>
    <property type="evidence" value="ECO:0007669"/>
    <property type="project" value="TreeGrafter"/>
</dbReference>
<dbReference type="CDD" id="cd09278">
    <property type="entry name" value="RNase_HI_prokaryote_like"/>
    <property type="match status" value="1"/>
</dbReference>
<dbReference type="Gene3D" id="3.30.420.10">
    <property type="entry name" value="Ribonuclease H-like superfamily/Ribonuclease H"/>
    <property type="match status" value="1"/>
</dbReference>
<dbReference type="HAMAP" id="MF_00042">
    <property type="entry name" value="RNase_H"/>
    <property type="match status" value="1"/>
</dbReference>
<dbReference type="InterPro" id="IPR050092">
    <property type="entry name" value="RNase_H"/>
</dbReference>
<dbReference type="InterPro" id="IPR012337">
    <property type="entry name" value="RNaseH-like_sf"/>
</dbReference>
<dbReference type="InterPro" id="IPR002156">
    <property type="entry name" value="RNaseH_domain"/>
</dbReference>
<dbReference type="InterPro" id="IPR036397">
    <property type="entry name" value="RNaseH_sf"/>
</dbReference>
<dbReference type="InterPro" id="IPR022892">
    <property type="entry name" value="RNaseHI"/>
</dbReference>
<dbReference type="NCBIfam" id="NF001236">
    <property type="entry name" value="PRK00203.1"/>
    <property type="match status" value="1"/>
</dbReference>
<dbReference type="PANTHER" id="PTHR10642">
    <property type="entry name" value="RIBONUCLEASE H1"/>
    <property type="match status" value="1"/>
</dbReference>
<dbReference type="PANTHER" id="PTHR10642:SF26">
    <property type="entry name" value="RIBONUCLEASE H1"/>
    <property type="match status" value="1"/>
</dbReference>
<dbReference type="Pfam" id="PF00075">
    <property type="entry name" value="RNase_H"/>
    <property type="match status" value="1"/>
</dbReference>
<dbReference type="SUPFAM" id="SSF53098">
    <property type="entry name" value="Ribonuclease H-like"/>
    <property type="match status" value="1"/>
</dbReference>
<dbReference type="PROSITE" id="PS50879">
    <property type="entry name" value="RNASE_H_1"/>
    <property type="match status" value="1"/>
</dbReference>
<feature type="chain" id="PRO_0000332573" description="Ribonuclease H">
    <location>
        <begin position="1"/>
        <end position="146"/>
    </location>
</feature>
<feature type="domain" description="RNase H type-1" evidence="2">
    <location>
        <begin position="1"/>
        <end position="136"/>
    </location>
</feature>
<feature type="binding site" evidence="1">
    <location>
        <position position="9"/>
    </location>
    <ligand>
        <name>Mg(2+)</name>
        <dbReference type="ChEBI" id="CHEBI:18420"/>
        <label>1</label>
    </ligand>
</feature>
<feature type="binding site" evidence="1">
    <location>
        <position position="9"/>
    </location>
    <ligand>
        <name>Mg(2+)</name>
        <dbReference type="ChEBI" id="CHEBI:18420"/>
        <label>2</label>
    </ligand>
</feature>
<feature type="binding site" evidence="1">
    <location>
        <position position="47"/>
    </location>
    <ligand>
        <name>Mg(2+)</name>
        <dbReference type="ChEBI" id="CHEBI:18420"/>
        <label>1</label>
    </ligand>
</feature>
<feature type="binding site" evidence="1">
    <location>
        <position position="69"/>
    </location>
    <ligand>
        <name>Mg(2+)</name>
        <dbReference type="ChEBI" id="CHEBI:18420"/>
        <label>1</label>
    </ligand>
</feature>
<feature type="binding site" evidence="1">
    <location>
        <position position="128"/>
    </location>
    <ligand>
        <name>Mg(2+)</name>
        <dbReference type="ChEBI" id="CHEBI:18420"/>
        <label>2</label>
    </ligand>
</feature>
<reference key="1">
    <citation type="submission" date="2006-12" db="EMBL/GenBank/DDBJ databases">
        <authorList>
            <person name="Fouts D.E."/>
            <person name="Nelson K.E."/>
            <person name="Sebastian Y."/>
        </authorList>
    </citation>
    <scope>NUCLEOTIDE SEQUENCE [LARGE SCALE GENOMIC DNA]</scope>
    <source>
        <strain>81-176</strain>
    </source>
</reference>
<sequence>MKHIEIYTDGSCLNNPGFGGWAYILRYKEYQKEGFGAEANTTNNRMELMAIIESLKALKEPCEISLFTDSNLMVQSINEWLEGWIKKDFKGKKNIDLWKEYIKVAKSHKIKAFWVKAHNGHLENERCDTLAREAALKIARENDEKH</sequence>
<keyword id="KW-0963">Cytoplasm</keyword>
<keyword id="KW-0255">Endonuclease</keyword>
<keyword id="KW-0378">Hydrolase</keyword>
<keyword id="KW-0460">Magnesium</keyword>
<keyword id="KW-0479">Metal-binding</keyword>
<keyword id="KW-0540">Nuclease</keyword>
<gene>
    <name evidence="1" type="primary">rnhA</name>
    <name type="ordered locus">CJJ81176_1627</name>
</gene>
<comment type="function">
    <text evidence="1">Endonuclease that specifically degrades the RNA of RNA-DNA hybrids.</text>
</comment>
<comment type="catalytic activity">
    <reaction evidence="1">
        <text>Endonucleolytic cleavage to 5'-phosphomonoester.</text>
        <dbReference type="EC" id="3.1.26.4"/>
    </reaction>
</comment>
<comment type="cofactor">
    <cofactor evidence="1">
        <name>Mg(2+)</name>
        <dbReference type="ChEBI" id="CHEBI:18420"/>
    </cofactor>
    <text evidence="1">Binds 1 Mg(2+) ion per subunit. May bind a second metal ion at a regulatory site, or after substrate binding.</text>
</comment>
<comment type="subunit">
    <text evidence="1">Monomer.</text>
</comment>
<comment type="subcellular location">
    <subcellularLocation>
        <location evidence="1">Cytoplasm</location>
    </subcellularLocation>
</comment>
<comment type="similarity">
    <text evidence="1">Belongs to the RNase H family.</text>
</comment>
<protein>
    <recommendedName>
        <fullName evidence="1">Ribonuclease H</fullName>
        <shortName evidence="1">RNase H</shortName>
        <ecNumber evidence="1">3.1.26.4</ecNumber>
    </recommendedName>
</protein>
<accession>A1W1N8</accession>